<protein>
    <recommendedName>
        <fullName evidence="1">Large ribosomal subunit protein uL23</fullName>
    </recommendedName>
    <alternativeName>
        <fullName evidence="2">50S ribosomal protein L23</fullName>
    </alternativeName>
</protein>
<evidence type="ECO:0000255" key="1">
    <source>
        <dbReference type="HAMAP-Rule" id="MF_01369"/>
    </source>
</evidence>
<evidence type="ECO:0000305" key="2"/>
<gene>
    <name evidence="1" type="primary">rplW</name>
    <name type="ordered locus">NWMN_2150</name>
</gene>
<accession>A6QJ90</accession>
<feature type="chain" id="PRO_1000073446" description="Large ribosomal subunit protein uL23">
    <location>
        <begin position="1"/>
        <end position="91"/>
    </location>
</feature>
<dbReference type="EMBL" id="AP009351">
    <property type="protein sequence ID" value="BAF68422.1"/>
    <property type="molecule type" value="Genomic_DNA"/>
</dbReference>
<dbReference type="RefSeq" id="WP_000388082.1">
    <property type="nucleotide sequence ID" value="NZ_JBBIAE010000006.1"/>
</dbReference>
<dbReference type="SMR" id="A6QJ90"/>
<dbReference type="KEGG" id="sae:NWMN_2150"/>
<dbReference type="HOGENOM" id="CLU_037562_3_2_9"/>
<dbReference type="Proteomes" id="UP000006386">
    <property type="component" value="Chromosome"/>
</dbReference>
<dbReference type="GO" id="GO:1990904">
    <property type="term" value="C:ribonucleoprotein complex"/>
    <property type="evidence" value="ECO:0007669"/>
    <property type="project" value="UniProtKB-KW"/>
</dbReference>
<dbReference type="GO" id="GO:0005840">
    <property type="term" value="C:ribosome"/>
    <property type="evidence" value="ECO:0007669"/>
    <property type="project" value="UniProtKB-KW"/>
</dbReference>
<dbReference type="GO" id="GO:0019843">
    <property type="term" value="F:rRNA binding"/>
    <property type="evidence" value="ECO:0007669"/>
    <property type="project" value="UniProtKB-UniRule"/>
</dbReference>
<dbReference type="GO" id="GO:0003735">
    <property type="term" value="F:structural constituent of ribosome"/>
    <property type="evidence" value="ECO:0007669"/>
    <property type="project" value="InterPro"/>
</dbReference>
<dbReference type="GO" id="GO:0006412">
    <property type="term" value="P:translation"/>
    <property type="evidence" value="ECO:0007669"/>
    <property type="project" value="UniProtKB-UniRule"/>
</dbReference>
<dbReference type="FunFam" id="3.30.70.330:FF:000001">
    <property type="entry name" value="50S ribosomal protein L23"/>
    <property type="match status" value="1"/>
</dbReference>
<dbReference type="Gene3D" id="3.30.70.330">
    <property type="match status" value="1"/>
</dbReference>
<dbReference type="HAMAP" id="MF_01369_B">
    <property type="entry name" value="Ribosomal_uL23_B"/>
    <property type="match status" value="1"/>
</dbReference>
<dbReference type="InterPro" id="IPR012677">
    <property type="entry name" value="Nucleotide-bd_a/b_plait_sf"/>
</dbReference>
<dbReference type="InterPro" id="IPR013025">
    <property type="entry name" value="Ribosomal_uL23-like"/>
</dbReference>
<dbReference type="InterPro" id="IPR012678">
    <property type="entry name" value="Ribosomal_uL23/eL15/eS24_sf"/>
</dbReference>
<dbReference type="NCBIfam" id="NF004363">
    <property type="entry name" value="PRK05738.2-4"/>
    <property type="match status" value="1"/>
</dbReference>
<dbReference type="PANTHER" id="PTHR11620">
    <property type="entry name" value="60S RIBOSOMAL PROTEIN L23A"/>
    <property type="match status" value="1"/>
</dbReference>
<dbReference type="Pfam" id="PF00276">
    <property type="entry name" value="Ribosomal_L23"/>
    <property type="match status" value="1"/>
</dbReference>
<dbReference type="SUPFAM" id="SSF54189">
    <property type="entry name" value="Ribosomal proteins S24e, L23 and L15e"/>
    <property type="match status" value="1"/>
</dbReference>
<comment type="function">
    <text evidence="1">One of the early assembly proteins it binds 23S rRNA. One of the proteins that surrounds the polypeptide exit tunnel on the outside of the ribosome. Forms the main docking site for trigger factor binding to the ribosome.</text>
</comment>
<comment type="subunit">
    <text evidence="1">Part of the 50S ribosomal subunit. Contacts protein L29, and trigger factor when it is bound to the ribosome.</text>
</comment>
<comment type="similarity">
    <text evidence="1">Belongs to the universal ribosomal protein uL23 family.</text>
</comment>
<sequence length="91" mass="10605">MEARDILKRPVITEKSSEAMAEDKYTFDVDTRVNKTQVKMAVEEIFNVKVASVNIMNYKPKKKRMGRYQGYTNKRRKAIVTLKEGSIDLFN</sequence>
<organism>
    <name type="scientific">Staphylococcus aureus (strain Newman)</name>
    <dbReference type="NCBI Taxonomy" id="426430"/>
    <lineage>
        <taxon>Bacteria</taxon>
        <taxon>Bacillati</taxon>
        <taxon>Bacillota</taxon>
        <taxon>Bacilli</taxon>
        <taxon>Bacillales</taxon>
        <taxon>Staphylococcaceae</taxon>
        <taxon>Staphylococcus</taxon>
    </lineage>
</organism>
<proteinExistence type="inferred from homology"/>
<name>RL23_STAAE</name>
<reference key="1">
    <citation type="journal article" date="2008" name="J. Bacteriol.">
        <title>Genome sequence of Staphylococcus aureus strain Newman and comparative analysis of staphylococcal genomes: polymorphism and evolution of two major pathogenicity islands.</title>
        <authorList>
            <person name="Baba T."/>
            <person name="Bae T."/>
            <person name="Schneewind O."/>
            <person name="Takeuchi F."/>
            <person name="Hiramatsu K."/>
        </authorList>
    </citation>
    <scope>NUCLEOTIDE SEQUENCE [LARGE SCALE GENOMIC DNA]</scope>
    <source>
        <strain>Newman</strain>
    </source>
</reference>
<keyword id="KW-0687">Ribonucleoprotein</keyword>
<keyword id="KW-0689">Ribosomal protein</keyword>
<keyword id="KW-0694">RNA-binding</keyword>
<keyword id="KW-0699">rRNA-binding</keyword>